<reference key="1">
    <citation type="journal article" date="2008" name="Antimicrob. Agents Chemother.">
        <title>Mutated response regulator graR is responsible for phenotypic conversion of Staphylococcus aureus from heterogeneous vancomycin-intermediate resistance to vancomycin-intermediate resistance.</title>
        <authorList>
            <person name="Neoh H.-M."/>
            <person name="Cui L."/>
            <person name="Yuzawa H."/>
            <person name="Takeuchi F."/>
            <person name="Matsuo M."/>
            <person name="Hiramatsu K."/>
        </authorList>
    </citation>
    <scope>NUCLEOTIDE SEQUENCE [LARGE SCALE GENOMIC DNA]</scope>
    <source>
        <strain>Mu3 / ATCC 700698</strain>
    </source>
</reference>
<comment type="similarity">
    <text evidence="1">Belongs to the UPF0297 family.</text>
</comment>
<proteinExistence type="inferred from homology"/>
<organism>
    <name type="scientific">Staphylococcus aureus (strain Mu3 / ATCC 700698)</name>
    <dbReference type="NCBI Taxonomy" id="418127"/>
    <lineage>
        <taxon>Bacteria</taxon>
        <taxon>Bacillati</taxon>
        <taxon>Bacillota</taxon>
        <taxon>Bacilli</taxon>
        <taxon>Bacillales</taxon>
        <taxon>Staphylococcaceae</taxon>
        <taxon>Staphylococcus</taxon>
    </lineage>
</organism>
<accession>A7X327</accession>
<protein>
    <recommendedName>
        <fullName evidence="1">UPF0297 protein SAHV_1604</fullName>
    </recommendedName>
</protein>
<sequence length="86" mass="10303">MENFDKTMKFDYEELPTQDVRDVLNNVYRTLDERGYNAVNQIVGYLLSGDPAYIPRQNEARNQIRHIDRDVIMEELVSYYLKEQNK</sequence>
<feature type="chain" id="PRO_1000024483" description="UPF0297 protein SAHV_1604">
    <location>
        <begin position="1"/>
        <end position="86"/>
    </location>
</feature>
<name>Y1604_STAA1</name>
<evidence type="ECO:0000255" key="1">
    <source>
        <dbReference type="HAMAP-Rule" id="MF_01507"/>
    </source>
</evidence>
<dbReference type="EMBL" id="AP009324">
    <property type="protein sequence ID" value="BAF78487.1"/>
    <property type="molecule type" value="Genomic_DNA"/>
</dbReference>
<dbReference type="RefSeq" id="WP_000426912.1">
    <property type="nucleotide sequence ID" value="NZ_CTYB01000003.1"/>
</dbReference>
<dbReference type="SMR" id="A7X327"/>
<dbReference type="KEGG" id="saw:SAHV_1604"/>
<dbReference type="HOGENOM" id="CLU_162466_0_0_9"/>
<dbReference type="HAMAP" id="MF_01507">
    <property type="entry name" value="UPF0297"/>
    <property type="match status" value="1"/>
</dbReference>
<dbReference type="InterPro" id="IPR009309">
    <property type="entry name" value="IreB"/>
</dbReference>
<dbReference type="NCBIfam" id="NF003997">
    <property type="entry name" value="PRK05473.1"/>
    <property type="match status" value="1"/>
</dbReference>
<dbReference type="PANTHER" id="PTHR40067">
    <property type="entry name" value="UPF0297 PROTEIN YRZL"/>
    <property type="match status" value="1"/>
</dbReference>
<dbReference type="PANTHER" id="PTHR40067:SF1">
    <property type="entry name" value="UPF0297 PROTEIN YRZL"/>
    <property type="match status" value="1"/>
</dbReference>
<dbReference type="Pfam" id="PF06135">
    <property type="entry name" value="IreB"/>
    <property type="match status" value="1"/>
</dbReference>
<dbReference type="PIRSF" id="PIRSF037258">
    <property type="entry name" value="DUF965_bac"/>
    <property type="match status" value="1"/>
</dbReference>
<gene>
    <name type="ordered locus">SAHV_1604</name>
</gene>